<sequence>MEEVEVAEVKNARVSLTGEKTKPMKLAEVTSINVNRTKTEMEEFNRVLGGGVVPGSLVLIGGDPGIGKSTLLLQVSTQLSQVGTVLYVSGEESAQQIKLRAERLGDIDSEFYLYAETNMQSVRAEVERIQPDFLIIDSIQTIMSPEISGVQGSVSQVREVTAELMQLAKTNNIAIFIVGHVTKEGTLAGPRMLEHMVDTVLYFEGERHHTFRILRAVKNRFGSTNEIGIFEMQSGGLVEVLNPSQVFLEERLDGATGSSIVVTMEGTRPILAEVQALVTPTMFGNAKRTTTGLDFNRASLIMAVLEKRAGLLLQNQDAYLKSAGGVKLDEPAIDLAVAVAIASSYKDKPTNPQECFVGELGLTGEIRRVNRIEQRINEAAKLGFTKIYVPKNSLTGITLPKEIQVIGVTTIQEVLKKVFA</sequence>
<accession>Q8DRP0</accession>
<dbReference type="EC" id="3.6.4.-" evidence="1"/>
<dbReference type="EMBL" id="AE007317">
    <property type="protein sequence ID" value="AAK98829.1"/>
    <property type="molecule type" value="Genomic_DNA"/>
</dbReference>
<dbReference type="PIR" id="A97875">
    <property type="entry name" value="A97875"/>
</dbReference>
<dbReference type="RefSeq" id="NP_357619.1">
    <property type="nucleotide sequence ID" value="NC_003098.1"/>
</dbReference>
<dbReference type="PDB" id="5LKM">
    <property type="method" value="X-ray"/>
    <property type="resolution" value="3.50 A"/>
    <property type="chains" value="A/B/C=1-419"/>
</dbReference>
<dbReference type="PDB" id="5LKQ">
    <property type="method" value="X-ray"/>
    <property type="resolution" value="2.50 A"/>
    <property type="chains" value="A/B=244-419"/>
</dbReference>
<dbReference type="PDBsum" id="5LKM"/>
<dbReference type="PDBsum" id="5LKQ"/>
<dbReference type="SMR" id="Q8DRP0"/>
<dbReference type="STRING" id="171101.spr0025"/>
<dbReference type="MEROPS" id="S16.A04"/>
<dbReference type="KEGG" id="spr:spr0025"/>
<dbReference type="PATRIC" id="fig|171101.6.peg.27"/>
<dbReference type="eggNOG" id="COG1066">
    <property type="taxonomic scope" value="Bacteria"/>
</dbReference>
<dbReference type="HOGENOM" id="CLU_018264_0_1_9"/>
<dbReference type="Proteomes" id="UP000000586">
    <property type="component" value="Chromosome"/>
</dbReference>
<dbReference type="GO" id="GO:0005524">
    <property type="term" value="F:ATP binding"/>
    <property type="evidence" value="ECO:0007669"/>
    <property type="project" value="UniProtKB-UniRule"/>
</dbReference>
<dbReference type="GO" id="GO:0016887">
    <property type="term" value="F:ATP hydrolysis activity"/>
    <property type="evidence" value="ECO:0007669"/>
    <property type="project" value="InterPro"/>
</dbReference>
<dbReference type="GO" id="GO:0140664">
    <property type="term" value="F:ATP-dependent DNA damage sensor activity"/>
    <property type="evidence" value="ECO:0007669"/>
    <property type="project" value="InterPro"/>
</dbReference>
<dbReference type="GO" id="GO:0003684">
    <property type="term" value="F:damaged DNA binding"/>
    <property type="evidence" value="ECO:0007669"/>
    <property type="project" value="InterPro"/>
</dbReference>
<dbReference type="GO" id="GO:0046872">
    <property type="term" value="F:metal ion binding"/>
    <property type="evidence" value="ECO:0007669"/>
    <property type="project" value="UniProtKB-KW"/>
</dbReference>
<dbReference type="GO" id="GO:0000725">
    <property type="term" value="P:recombinational repair"/>
    <property type="evidence" value="ECO:0000318"/>
    <property type="project" value="GO_Central"/>
</dbReference>
<dbReference type="CDD" id="cd01121">
    <property type="entry name" value="RadA_SMS_N"/>
    <property type="match status" value="1"/>
</dbReference>
<dbReference type="FunFam" id="3.30.230.10:FF:000031">
    <property type="entry name" value="DNA repair protein RadA"/>
    <property type="match status" value="1"/>
</dbReference>
<dbReference type="FunFam" id="3.40.50.300:FF:000050">
    <property type="entry name" value="DNA repair protein RadA"/>
    <property type="match status" value="1"/>
</dbReference>
<dbReference type="Gene3D" id="3.30.230.10">
    <property type="match status" value="1"/>
</dbReference>
<dbReference type="Gene3D" id="3.40.50.300">
    <property type="entry name" value="P-loop containing nucleotide triphosphate hydrolases"/>
    <property type="match status" value="1"/>
</dbReference>
<dbReference type="HAMAP" id="MF_01498">
    <property type="entry name" value="RadA_bact"/>
    <property type="match status" value="1"/>
</dbReference>
<dbReference type="InterPro" id="IPR003593">
    <property type="entry name" value="AAA+_ATPase"/>
</dbReference>
<dbReference type="InterPro" id="IPR004504">
    <property type="entry name" value="DNA_repair_RadA"/>
</dbReference>
<dbReference type="InterPro" id="IPR027417">
    <property type="entry name" value="P-loop_NTPase"/>
</dbReference>
<dbReference type="InterPro" id="IPR020588">
    <property type="entry name" value="RecA_ATP-bd"/>
</dbReference>
<dbReference type="InterPro" id="IPR020568">
    <property type="entry name" value="Ribosomal_Su5_D2-typ_SF"/>
</dbReference>
<dbReference type="InterPro" id="IPR014721">
    <property type="entry name" value="Ribsml_uS5_D2-typ_fold_subgr"/>
</dbReference>
<dbReference type="NCBIfam" id="TIGR00416">
    <property type="entry name" value="sms"/>
    <property type="match status" value="1"/>
</dbReference>
<dbReference type="PANTHER" id="PTHR32472">
    <property type="entry name" value="DNA REPAIR PROTEIN RADA"/>
    <property type="match status" value="1"/>
</dbReference>
<dbReference type="PANTHER" id="PTHR32472:SF10">
    <property type="entry name" value="DNA REPAIR PROTEIN RADA-LIKE PROTEIN"/>
    <property type="match status" value="1"/>
</dbReference>
<dbReference type="Pfam" id="PF13481">
    <property type="entry name" value="AAA_25"/>
    <property type="match status" value="1"/>
</dbReference>
<dbReference type="Pfam" id="PF13541">
    <property type="entry name" value="ChlI"/>
    <property type="match status" value="1"/>
</dbReference>
<dbReference type="PRINTS" id="PR01874">
    <property type="entry name" value="DNAREPAIRADA"/>
</dbReference>
<dbReference type="SMART" id="SM00382">
    <property type="entry name" value="AAA"/>
    <property type="match status" value="1"/>
</dbReference>
<dbReference type="SUPFAM" id="SSF52540">
    <property type="entry name" value="P-loop containing nucleoside triphosphate hydrolases"/>
    <property type="match status" value="1"/>
</dbReference>
<dbReference type="SUPFAM" id="SSF54211">
    <property type="entry name" value="Ribosomal protein S5 domain 2-like"/>
    <property type="match status" value="1"/>
</dbReference>
<dbReference type="PROSITE" id="PS50162">
    <property type="entry name" value="RECA_2"/>
    <property type="match status" value="1"/>
</dbReference>
<organism>
    <name type="scientific">Streptococcus pneumoniae (strain ATCC BAA-255 / R6)</name>
    <dbReference type="NCBI Taxonomy" id="171101"/>
    <lineage>
        <taxon>Bacteria</taxon>
        <taxon>Bacillati</taxon>
        <taxon>Bacillota</taxon>
        <taxon>Bacilli</taxon>
        <taxon>Lactobacillales</taxon>
        <taxon>Streptococcaceae</taxon>
        <taxon>Streptococcus</taxon>
    </lineage>
</organism>
<gene>
    <name evidence="1" type="primary">radA</name>
    <name type="ordered locus">spr0025</name>
</gene>
<comment type="function">
    <text evidence="1 2">Plays a role in repairing double-strand DNA breaks, probably involving stabilizing or processing branched DNA or blocked replication forks (By similarity). Required for efficient transformation with chromosomal (linear) DNA, but not for replicative plasmid DNA. Its increased sensitivity to a DNA damaging agent suggests it may be required for DNA repair (PubMed:17631629).</text>
</comment>
<comment type="domain">
    <text evidence="1 3">The middle region has homology to RecA with ATPase motifs including the RadA KNRFG motif, while the C-terminus is homologous to Lon protease (By similarity). Unlike most bacteria many S.pneumoniae do not have the N-terminal putative zinc-finger.</text>
</comment>
<comment type="disruption phenotype">
    <text evidence="2">Natural transformation efficiency with chromosomal DNA decreases to 10%; uptake of replicating plasmid DNA is unaffected. Increased sensitivity to methyl methanesulfonate but not UV light (PubMed:17631629).</text>
</comment>
<comment type="similarity">
    <text evidence="1">Belongs to the RecA family. RadA subfamily.</text>
</comment>
<reference key="1">
    <citation type="journal article" date="2001" name="J. Bacteriol.">
        <title>Genome of the bacterium Streptococcus pneumoniae strain R6.</title>
        <authorList>
            <person name="Hoskins J."/>
            <person name="Alborn W.E. Jr."/>
            <person name="Arnold J."/>
            <person name="Blaszczak L.C."/>
            <person name="Burgett S."/>
            <person name="DeHoff B.S."/>
            <person name="Estrem S.T."/>
            <person name="Fritz L."/>
            <person name="Fu D.-J."/>
            <person name="Fuller W."/>
            <person name="Geringer C."/>
            <person name="Gilmour R."/>
            <person name="Glass J.S."/>
            <person name="Khoja H."/>
            <person name="Kraft A.R."/>
            <person name="Lagace R.E."/>
            <person name="LeBlanc D.J."/>
            <person name="Lee L.N."/>
            <person name="Lefkowitz E.J."/>
            <person name="Lu J."/>
            <person name="Matsushima P."/>
            <person name="McAhren S.M."/>
            <person name="McHenney M."/>
            <person name="McLeaster K."/>
            <person name="Mundy C.W."/>
            <person name="Nicas T.I."/>
            <person name="Norris F.H."/>
            <person name="O'Gara M."/>
            <person name="Peery R.B."/>
            <person name="Robertson G.T."/>
            <person name="Rockey P."/>
            <person name="Sun P.-M."/>
            <person name="Winkler M.E."/>
            <person name="Yang Y."/>
            <person name="Young-Bellido M."/>
            <person name="Zhao G."/>
            <person name="Zook C.A."/>
            <person name="Baltz R.H."/>
            <person name="Jaskunas S.R."/>
            <person name="Rosteck P.R. Jr."/>
            <person name="Skatrud P.L."/>
            <person name="Glass J.I."/>
        </authorList>
    </citation>
    <scope>NUCLEOTIDE SEQUENCE [LARGE SCALE GENOMIC DNA]</scope>
    <source>
        <strain>ATCC BAA-255 / R6</strain>
    </source>
</reference>
<reference key="2">
    <citation type="journal article" date="2007" name="J. Bacteriol.">
        <title>Search for genes essential for pneumococcal transformation: the RADA DNA repair protein plays a role in genomic recombination of donor DNA.</title>
        <authorList>
            <person name="Burghout P."/>
            <person name="Bootsma H.J."/>
            <person name="Kloosterman T.G."/>
            <person name="Bijlsma J.J."/>
            <person name="de Jongh C.E."/>
            <person name="Kuipers O.P."/>
            <person name="Hermans P.W."/>
        </authorList>
    </citation>
    <scope>FUNCTION</scope>
    <scope>DISRUPTION PHENOTYPE</scope>
    <source>
        <strain>ATCC BAA-255 / R6</strain>
    </source>
</reference>
<protein>
    <recommendedName>
        <fullName evidence="1">DNA repair protein RadA</fullName>
        <ecNumber evidence="1">3.6.4.-</ecNumber>
    </recommendedName>
    <alternativeName>
        <fullName evidence="1">Branch migration protein RadA</fullName>
    </alternativeName>
</protein>
<evidence type="ECO:0000255" key="1">
    <source>
        <dbReference type="HAMAP-Rule" id="MF_01498"/>
    </source>
</evidence>
<evidence type="ECO:0000269" key="2">
    <source>
    </source>
</evidence>
<evidence type="ECO:0000305" key="3"/>
<evidence type="ECO:0007829" key="4">
    <source>
        <dbReference type="PDB" id="5LKM"/>
    </source>
</evidence>
<evidence type="ECO:0007829" key="5">
    <source>
        <dbReference type="PDB" id="5LKQ"/>
    </source>
</evidence>
<feature type="chain" id="PRO_0000435882" description="DNA repair protein RadA">
    <location>
        <begin position="1"/>
        <end position="420"/>
    </location>
</feature>
<feature type="region of interest" description="Lon-protease-like" evidence="1">
    <location>
        <begin position="317"/>
        <end position="420"/>
    </location>
</feature>
<feature type="short sequence motif" description="RadA KNRFG motif" evidence="1">
    <location>
        <begin position="218"/>
        <end position="222"/>
    </location>
</feature>
<feature type="binding site" evidence="1">
    <location>
        <begin position="62"/>
        <end position="69"/>
    </location>
    <ligand>
        <name>ATP</name>
        <dbReference type="ChEBI" id="CHEBI:30616"/>
    </ligand>
</feature>
<feature type="helix" evidence="4">
    <location>
        <begin position="26"/>
        <end position="28"/>
    </location>
</feature>
<feature type="helix" evidence="4">
    <location>
        <begin position="42"/>
        <end position="47"/>
    </location>
</feature>
<feature type="strand" evidence="4">
    <location>
        <begin position="50"/>
        <end position="52"/>
    </location>
</feature>
<feature type="strand" evidence="4">
    <location>
        <begin position="54"/>
        <end position="62"/>
    </location>
</feature>
<feature type="helix" evidence="4">
    <location>
        <begin position="68"/>
        <end position="79"/>
    </location>
</feature>
<feature type="turn" evidence="4">
    <location>
        <begin position="80"/>
        <end position="82"/>
    </location>
</feature>
<feature type="strand" evidence="4">
    <location>
        <begin position="85"/>
        <end position="92"/>
    </location>
</feature>
<feature type="helix" evidence="4">
    <location>
        <begin position="94"/>
        <end position="104"/>
    </location>
</feature>
<feature type="strand" evidence="4">
    <location>
        <begin position="108"/>
        <end position="114"/>
    </location>
</feature>
<feature type="helix" evidence="4">
    <location>
        <begin position="119"/>
        <end position="129"/>
    </location>
</feature>
<feature type="strand" evidence="4">
    <location>
        <begin position="132"/>
        <end position="137"/>
    </location>
</feature>
<feature type="helix" evidence="4">
    <location>
        <begin position="139"/>
        <end position="141"/>
    </location>
</feature>
<feature type="helix" evidence="4">
    <location>
        <begin position="157"/>
        <end position="170"/>
    </location>
</feature>
<feature type="strand" evidence="4">
    <location>
        <begin position="174"/>
        <end position="180"/>
    </location>
</feature>
<feature type="helix" evidence="4">
    <location>
        <begin position="194"/>
        <end position="196"/>
    </location>
</feature>
<feature type="strand" evidence="4">
    <location>
        <begin position="197"/>
        <end position="204"/>
    </location>
</feature>
<feature type="strand" evidence="4">
    <location>
        <begin position="210"/>
        <end position="222"/>
    </location>
</feature>
<feature type="strand" evidence="4">
    <location>
        <begin position="227"/>
        <end position="232"/>
    </location>
</feature>
<feature type="strand" evidence="4">
    <location>
        <begin position="234"/>
        <end position="239"/>
    </location>
</feature>
<feature type="helix" evidence="5">
    <location>
        <begin position="245"/>
        <end position="250"/>
    </location>
</feature>
<feature type="strand" evidence="5">
    <location>
        <begin position="257"/>
        <end position="265"/>
    </location>
</feature>
<feature type="strand" evidence="5">
    <location>
        <begin position="268"/>
        <end position="280"/>
    </location>
</feature>
<feature type="strand" evidence="5">
    <location>
        <begin position="283"/>
        <end position="285"/>
    </location>
</feature>
<feature type="strand" evidence="5">
    <location>
        <begin position="288"/>
        <end position="293"/>
    </location>
</feature>
<feature type="helix" evidence="5">
    <location>
        <begin position="295"/>
        <end position="309"/>
    </location>
</feature>
<feature type="strand" evidence="5">
    <location>
        <begin position="316"/>
        <end position="322"/>
    </location>
</feature>
<feature type="helix" evidence="5">
    <location>
        <begin position="323"/>
        <end position="325"/>
    </location>
</feature>
<feature type="helix" evidence="5">
    <location>
        <begin position="331"/>
        <end position="333"/>
    </location>
</feature>
<feature type="helix" evidence="5">
    <location>
        <begin position="334"/>
        <end position="346"/>
    </location>
</feature>
<feature type="strand" evidence="5">
    <location>
        <begin position="354"/>
        <end position="356"/>
    </location>
</feature>
<feature type="strand" evidence="5">
    <location>
        <begin position="364"/>
        <end position="367"/>
    </location>
</feature>
<feature type="helix" evidence="5">
    <location>
        <begin position="372"/>
        <end position="381"/>
    </location>
</feature>
<feature type="strand" evidence="5">
    <location>
        <begin position="385"/>
        <end position="390"/>
    </location>
</feature>
<feature type="helix" evidence="5">
    <location>
        <begin position="391"/>
        <end position="393"/>
    </location>
</feature>
<feature type="turn" evidence="5">
    <location>
        <begin position="394"/>
        <end position="396"/>
    </location>
</feature>
<feature type="strand" evidence="5">
    <location>
        <begin position="403"/>
        <end position="408"/>
    </location>
</feature>
<feature type="helix" evidence="5">
    <location>
        <begin position="411"/>
        <end position="418"/>
    </location>
</feature>
<name>RADA_STRR6</name>
<proteinExistence type="evidence at protein level"/>
<keyword id="KW-0002">3D-structure</keyword>
<keyword id="KW-0067">ATP-binding</keyword>
<keyword id="KW-0227">DNA damage</keyword>
<keyword id="KW-0234">DNA repair</keyword>
<keyword id="KW-0238">DNA-binding</keyword>
<keyword id="KW-0378">Hydrolase</keyword>
<keyword id="KW-0479">Metal-binding</keyword>
<keyword id="KW-0547">Nucleotide-binding</keyword>
<keyword id="KW-1185">Reference proteome</keyword>
<keyword id="KW-0346">Stress response</keyword>